<organism>
    <name type="scientific">Alkaliphilus metalliredigens (strain QYMF)</name>
    <dbReference type="NCBI Taxonomy" id="293826"/>
    <lineage>
        <taxon>Bacteria</taxon>
        <taxon>Bacillati</taxon>
        <taxon>Bacillota</taxon>
        <taxon>Clostridia</taxon>
        <taxon>Peptostreptococcales</taxon>
        <taxon>Natronincolaceae</taxon>
        <taxon>Alkaliphilus</taxon>
    </lineage>
</organism>
<feature type="chain" id="PRO_0000381193" description="Biotin synthase">
    <location>
        <begin position="1"/>
        <end position="318"/>
    </location>
</feature>
<feature type="domain" description="Radical SAM core" evidence="2">
    <location>
        <begin position="44"/>
        <end position="270"/>
    </location>
</feature>
<feature type="binding site" evidence="1">
    <location>
        <position position="62"/>
    </location>
    <ligand>
        <name>[4Fe-4S] cluster</name>
        <dbReference type="ChEBI" id="CHEBI:49883"/>
        <note>4Fe-4S-S-AdoMet</note>
    </ligand>
</feature>
<feature type="binding site" evidence="1">
    <location>
        <position position="66"/>
    </location>
    <ligand>
        <name>[4Fe-4S] cluster</name>
        <dbReference type="ChEBI" id="CHEBI:49883"/>
        <note>4Fe-4S-S-AdoMet</note>
    </ligand>
</feature>
<feature type="binding site" evidence="1">
    <location>
        <position position="69"/>
    </location>
    <ligand>
        <name>[4Fe-4S] cluster</name>
        <dbReference type="ChEBI" id="CHEBI:49883"/>
        <note>4Fe-4S-S-AdoMet</note>
    </ligand>
</feature>
<feature type="binding site" evidence="1">
    <location>
        <position position="106"/>
    </location>
    <ligand>
        <name>[2Fe-2S] cluster</name>
        <dbReference type="ChEBI" id="CHEBI:190135"/>
    </ligand>
</feature>
<feature type="binding site" evidence="1">
    <location>
        <position position="138"/>
    </location>
    <ligand>
        <name>[2Fe-2S] cluster</name>
        <dbReference type="ChEBI" id="CHEBI:190135"/>
    </ligand>
</feature>
<feature type="binding site" evidence="1">
    <location>
        <position position="198"/>
    </location>
    <ligand>
        <name>[2Fe-2S] cluster</name>
        <dbReference type="ChEBI" id="CHEBI:190135"/>
    </ligand>
</feature>
<feature type="binding site" evidence="1">
    <location>
        <position position="268"/>
    </location>
    <ligand>
        <name>[2Fe-2S] cluster</name>
        <dbReference type="ChEBI" id="CHEBI:190135"/>
    </ligand>
</feature>
<keyword id="KW-0001">2Fe-2S</keyword>
<keyword id="KW-0004">4Fe-4S</keyword>
<keyword id="KW-0093">Biotin biosynthesis</keyword>
<keyword id="KW-0408">Iron</keyword>
<keyword id="KW-0411">Iron-sulfur</keyword>
<keyword id="KW-0479">Metal-binding</keyword>
<keyword id="KW-1185">Reference proteome</keyword>
<keyword id="KW-0949">S-adenosyl-L-methionine</keyword>
<keyword id="KW-0808">Transferase</keyword>
<protein>
    <recommendedName>
        <fullName evidence="1">Biotin synthase</fullName>
        <ecNumber evidence="1">2.8.1.6</ecNumber>
    </recommendedName>
</protein>
<dbReference type="EC" id="2.8.1.6" evidence="1"/>
<dbReference type="EMBL" id="CP000724">
    <property type="protein sequence ID" value="ABR49379.1"/>
    <property type="molecule type" value="Genomic_DNA"/>
</dbReference>
<dbReference type="RefSeq" id="WP_012064344.1">
    <property type="nucleotide sequence ID" value="NC_009633.1"/>
</dbReference>
<dbReference type="SMR" id="A6TT61"/>
<dbReference type="STRING" id="293826.Amet_3241"/>
<dbReference type="KEGG" id="amt:Amet_3241"/>
<dbReference type="eggNOG" id="COG0502">
    <property type="taxonomic scope" value="Bacteria"/>
</dbReference>
<dbReference type="HOGENOM" id="CLU_033172_2_1_9"/>
<dbReference type="OrthoDB" id="9786826at2"/>
<dbReference type="UniPathway" id="UPA00078">
    <property type="reaction ID" value="UER00162"/>
</dbReference>
<dbReference type="Proteomes" id="UP000001572">
    <property type="component" value="Chromosome"/>
</dbReference>
<dbReference type="GO" id="GO:0051537">
    <property type="term" value="F:2 iron, 2 sulfur cluster binding"/>
    <property type="evidence" value="ECO:0007669"/>
    <property type="project" value="UniProtKB-KW"/>
</dbReference>
<dbReference type="GO" id="GO:0051539">
    <property type="term" value="F:4 iron, 4 sulfur cluster binding"/>
    <property type="evidence" value="ECO:0007669"/>
    <property type="project" value="UniProtKB-KW"/>
</dbReference>
<dbReference type="GO" id="GO:0004076">
    <property type="term" value="F:biotin synthase activity"/>
    <property type="evidence" value="ECO:0007669"/>
    <property type="project" value="UniProtKB-UniRule"/>
</dbReference>
<dbReference type="GO" id="GO:0005506">
    <property type="term" value="F:iron ion binding"/>
    <property type="evidence" value="ECO:0007669"/>
    <property type="project" value="UniProtKB-UniRule"/>
</dbReference>
<dbReference type="GO" id="GO:0009102">
    <property type="term" value="P:biotin biosynthetic process"/>
    <property type="evidence" value="ECO:0007669"/>
    <property type="project" value="UniProtKB-UniRule"/>
</dbReference>
<dbReference type="CDD" id="cd01335">
    <property type="entry name" value="Radical_SAM"/>
    <property type="match status" value="1"/>
</dbReference>
<dbReference type="FunFam" id="3.20.20.70:FF:000026">
    <property type="entry name" value="Biotin synthase"/>
    <property type="match status" value="1"/>
</dbReference>
<dbReference type="Gene3D" id="3.20.20.70">
    <property type="entry name" value="Aldolase class I"/>
    <property type="match status" value="1"/>
</dbReference>
<dbReference type="HAMAP" id="MF_01694">
    <property type="entry name" value="BioB"/>
    <property type="match status" value="1"/>
</dbReference>
<dbReference type="InterPro" id="IPR013785">
    <property type="entry name" value="Aldolase_TIM"/>
</dbReference>
<dbReference type="InterPro" id="IPR010722">
    <property type="entry name" value="BATS_dom"/>
</dbReference>
<dbReference type="InterPro" id="IPR002684">
    <property type="entry name" value="Biotin_synth/BioAB"/>
</dbReference>
<dbReference type="InterPro" id="IPR024177">
    <property type="entry name" value="Biotin_synthase"/>
</dbReference>
<dbReference type="InterPro" id="IPR006638">
    <property type="entry name" value="Elp3/MiaA/NifB-like_rSAM"/>
</dbReference>
<dbReference type="InterPro" id="IPR007197">
    <property type="entry name" value="rSAM"/>
</dbReference>
<dbReference type="NCBIfam" id="TIGR00433">
    <property type="entry name" value="bioB"/>
    <property type="match status" value="1"/>
</dbReference>
<dbReference type="PANTHER" id="PTHR22976">
    <property type="entry name" value="BIOTIN SYNTHASE"/>
    <property type="match status" value="1"/>
</dbReference>
<dbReference type="PANTHER" id="PTHR22976:SF2">
    <property type="entry name" value="BIOTIN SYNTHASE, MITOCHONDRIAL"/>
    <property type="match status" value="1"/>
</dbReference>
<dbReference type="Pfam" id="PF06968">
    <property type="entry name" value="BATS"/>
    <property type="match status" value="1"/>
</dbReference>
<dbReference type="Pfam" id="PF04055">
    <property type="entry name" value="Radical_SAM"/>
    <property type="match status" value="1"/>
</dbReference>
<dbReference type="PIRSF" id="PIRSF001619">
    <property type="entry name" value="Biotin_synth"/>
    <property type="match status" value="1"/>
</dbReference>
<dbReference type="SFLD" id="SFLDG01278">
    <property type="entry name" value="biotin_synthase_like"/>
    <property type="match status" value="1"/>
</dbReference>
<dbReference type="SFLD" id="SFLDS00029">
    <property type="entry name" value="Radical_SAM"/>
    <property type="match status" value="1"/>
</dbReference>
<dbReference type="SMART" id="SM00876">
    <property type="entry name" value="BATS"/>
    <property type="match status" value="1"/>
</dbReference>
<dbReference type="SMART" id="SM00729">
    <property type="entry name" value="Elp3"/>
    <property type="match status" value="1"/>
</dbReference>
<dbReference type="SUPFAM" id="SSF102114">
    <property type="entry name" value="Radical SAM enzymes"/>
    <property type="match status" value="1"/>
</dbReference>
<dbReference type="PROSITE" id="PS51918">
    <property type="entry name" value="RADICAL_SAM"/>
    <property type="match status" value="1"/>
</dbReference>
<sequence>MDIKKLPKEIIEGRRLKREEDLRFFATANLEELCQGADNIRKVLCGDAVNLCSIINGKSGKCSENCKFCAQSSHHHTGIEEYSFLDTNLIVEDCKKHANKGVHRYSIVTAGRELKGKDLQVACDAYKRMKEECDIDLCASHGLLSEEAFIALKESGVSMYHENIETSKRNFPNICTTHTYKDKINAIKLAQRLGFKVCSGGIIGMGETFEDRLDMAVSLAELKIQSIPINTLMPIKGTTYEDLEPLTEDEILRTVAMFRFINPTANIRLAAGRSLMEDSGRRAFHAGANATITGDLLTTSGNNIDKDKEMLTQMGFHL</sequence>
<comment type="function">
    <text evidence="1">Catalyzes the conversion of dethiobiotin (DTB) to biotin by the insertion of a sulfur atom into dethiobiotin via a radical-based mechanism.</text>
</comment>
<comment type="catalytic activity">
    <reaction evidence="1">
        <text>(4R,5S)-dethiobiotin + (sulfur carrier)-SH + 2 reduced [2Fe-2S]-[ferredoxin] + 2 S-adenosyl-L-methionine = (sulfur carrier)-H + biotin + 2 5'-deoxyadenosine + 2 L-methionine + 2 oxidized [2Fe-2S]-[ferredoxin]</text>
        <dbReference type="Rhea" id="RHEA:22060"/>
        <dbReference type="Rhea" id="RHEA-COMP:10000"/>
        <dbReference type="Rhea" id="RHEA-COMP:10001"/>
        <dbReference type="Rhea" id="RHEA-COMP:14737"/>
        <dbReference type="Rhea" id="RHEA-COMP:14739"/>
        <dbReference type="ChEBI" id="CHEBI:17319"/>
        <dbReference type="ChEBI" id="CHEBI:29917"/>
        <dbReference type="ChEBI" id="CHEBI:33737"/>
        <dbReference type="ChEBI" id="CHEBI:33738"/>
        <dbReference type="ChEBI" id="CHEBI:57586"/>
        <dbReference type="ChEBI" id="CHEBI:57844"/>
        <dbReference type="ChEBI" id="CHEBI:59789"/>
        <dbReference type="ChEBI" id="CHEBI:64428"/>
        <dbReference type="ChEBI" id="CHEBI:149473"/>
        <dbReference type="EC" id="2.8.1.6"/>
    </reaction>
</comment>
<comment type="cofactor">
    <cofactor evidence="1">
        <name>[4Fe-4S] cluster</name>
        <dbReference type="ChEBI" id="CHEBI:49883"/>
    </cofactor>
    <text evidence="1">Binds 1 [4Fe-4S] cluster. The cluster is coordinated with 3 cysteines and an exchangeable S-adenosyl-L-methionine.</text>
</comment>
<comment type="cofactor">
    <cofactor evidence="1">
        <name>[2Fe-2S] cluster</name>
        <dbReference type="ChEBI" id="CHEBI:190135"/>
    </cofactor>
    <text evidence="1">Binds 1 [2Fe-2S] cluster. The cluster is coordinated with 3 cysteines and 1 arginine.</text>
</comment>
<comment type="pathway">
    <text evidence="1">Cofactor biosynthesis; biotin biosynthesis; biotin from 7,8-diaminononanoate: step 2/2.</text>
</comment>
<comment type="subunit">
    <text evidence="1">Homodimer.</text>
</comment>
<comment type="similarity">
    <text evidence="1">Belongs to the radical SAM superfamily. Biotin synthase family.</text>
</comment>
<evidence type="ECO:0000255" key="1">
    <source>
        <dbReference type="HAMAP-Rule" id="MF_01694"/>
    </source>
</evidence>
<evidence type="ECO:0000255" key="2">
    <source>
        <dbReference type="PROSITE-ProRule" id="PRU01266"/>
    </source>
</evidence>
<accession>A6TT61</accession>
<proteinExistence type="inferred from homology"/>
<reference key="1">
    <citation type="journal article" date="2016" name="Genome Announc.">
        <title>Complete genome sequence of Alkaliphilus metalliredigens strain QYMF, an alkaliphilic and metal-reducing bacterium isolated from borax-contaminated leachate ponds.</title>
        <authorList>
            <person name="Hwang C."/>
            <person name="Copeland A."/>
            <person name="Lucas S."/>
            <person name="Lapidus A."/>
            <person name="Barry K."/>
            <person name="Detter J.C."/>
            <person name="Glavina Del Rio T."/>
            <person name="Hammon N."/>
            <person name="Israni S."/>
            <person name="Dalin E."/>
            <person name="Tice H."/>
            <person name="Pitluck S."/>
            <person name="Chertkov O."/>
            <person name="Brettin T."/>
            <person name="Bruce D."/>
            <person name="Han C."/>
            <person name="Schmutz J."/>
            <person name="Larimer F."/>
            <person name="Land M.L."/>
            <person name="Hauser L."/>
            <person name="Kyrpides N."/>
            <person name="Mikhailova N."/>
            <person name="Ye Q."/>
            <person name="Zhou J."/>
            <person name="Richardson P."/>
            <person name="Fields M.W."/>
        </authorList>
    </citation>
    <scope>NUCLEOTIDE SEQUENCE [LARGE SCALE GENOMIC DNA]</scope>
    <source>
        <strain>QYMF</strain>
    </source>
</reference>
<name>BIOB_ALKMQ</name>
<gene>
    <name evidence="1" type="primary">bioB</name>
    <name type="ordered locus">Amet_3241</name>
</gene>